<organism>
    <name type="scientific">Rhizobium etli (strain CIAT 652)</name>
    <dbReference type="NCBI Taxonomy" id="491916"/>
    <lineage>
        <taxon>Bacteria</taxon>
        <taxon>Pseudomonadati</taxon>
        <taxon>Pseudomonadota</taxon>
        <taxon>Alphaproteobacteria</taxon>
        <taxon>Hyphomicrobiales</taxon>
        <taxon>Rhizobiaceae</taxon>
        <taxon>Rhizobium/Agrobacterium group</taxon>
        <taxon>Rhizobium</taxon>
    </lineage>
</organism>
<name>CHED_RHIE6</name>
<evidence type="ECO:0000255" key="1">
    <source>
        <dbReference type="HAMAP-Rule" id="MF_01440"/>
    </source>
</evidence>
<comment type="function">
    <text evidence="1">Probably deamidates glutamine residues to glutamate on methyl-accepting chemotaxis receptors (MCPs), playing an important role in chemotaxis.</text>
</comment>
<comment type="catalytic activity">
    <reaction evidence="1">
        <text>L-glutaminyl-[protein] + H2O = L-glutamyl-[protein] + NH4(+)</text>
        <dbReference type="Rhea" id="RHEA:16441"/>
        <dbReference type="Rhea" id="RHEA-COMP:10207"/>
        <dbReference type="Rhea" id="RHEA-COMP:10208"/>
        <dbReference type="ChEBI" id="CHEBI:15377"/>
        <dbReference type="ChEBI" id="CHEBI:28938"/>
        <dbReference type="ChEBI" id="CHEBI:29973"/>
        <dbReference type="ChEBI" id="CHEBI:30011"/>
        <dbReference type="EC" id="3.5.1.44"/>
    </reaction>
</comment>
<comment type="similarity">
    <text evidence="1">Belongs to the CheD family.</text>
</comment>
<dbReference type="EC" id="3.5.1.44" evidence="1"/>
<dbReference type="EMBL" id="CP001074">
    <property type="protein sequence ID" value="ACE89710.1"/>
    <property type="molecule type" value="Genomic_DNA"/>
</dbReference>
<dbReference type="SMR" id="B3PPK3"/>
<dbReference type="KEGG" id="rec:RHECIAT_CH0000721"/>
<dbReference type="eggNOG" id="COG1871">
    <property type="taxonomic scope" value="Bacteria"/>
</dbReference>
<dbReference type="HOGENOM" id="CLU_087854_0_1_5"/>
<dbReference type="Proteomes" id="UP000008817">
    <property type="component" value="Chromosome"/>
</dbReference>
<dbReference type="GO" id="GO:0050568">
    <property type="term" value="F:protein-glutamine glutaminase activity"/>
    <property type="evidence" value="ECO:0007669"/>
    <property type="project" value="UniProtKB-UniRule"/>
</dbReference>
<dbReference type="GO" id="GO:0006935">
    <property type="term" value="P:chemotaxis"/>
    <property type="evidence" value="ECO:0007669"/>
    <property type="project" value="UniProtKB-UniRule"/>
</dbReference>
<dbReference type="CDD" id="cd16352">
    <property type="entry name" value="CheD"/>
    <property type="match status" value="1"/>
</dbReference>
<dbReference type="FunFam" id="3.30.1330.200:FF:000001">
    <property type="entry name" value="Probable chemoreceptor glutamine deamidase CheD"/>
    <property type="match status" value="1"/>
</dbReference>
<dbReference type="Gene3D" id="3.30.1330.200">
    <property type="match status" value="1"/>
</dbReference>
<dbReference type="HAMAP" id="MF_01440">
    <property type="entry name" value="CheD"/>
    <property type="match status" value="1"/>
</dbReference>
<dbReference type="InterPro" id="IPR038592">
    <property type="entry name" value="CheD-like_sf"/>
</dbReference>
<dbReference type="InterPro" id="IPR005659">
    <property type="entry name" value="Chemorcpt_Glu_NH3ase_CheD"/>
</dbReference>
<dbReference type="InterPro" id="IPR011324">
    <property type="entry name" value="Cytotoxic_necrot_fac-like_cat"/>
</dbReference>
<dbReference type="NCBIfam" id="NF010019">
    <property type="entry name" value="PRK13497.1"/>
    <property type="match status" value="1"/>
</dbReference>
<dbReference type="PANTHER" id="PTHR35147">
    <property type="entry name" value="CHEMORECEPTOR GLUTAMINE DEAMIDASE CHED-RELATED"/>
    <property type="match status" value="1"/>
</dbReference>
<dbReference type="PANTHER" id="PTHR35147:SF2">
    <property type="entry name" value="CHEMORECEPTOR GLUTAMINE DEAMIDASE CHED-RELATED"/>
    <property type="match status" value="1"/>
</dbReference>
<dbReference type="Pfam" id="PF03975">
    <property type="entry name" value="CheD"/>
    <property type="match status" value="1"/>
</dbReference>
<dbReference type="SUPFAM" id="SSF64438">
    <property type="entry name" value="CNF1/YfiH-like putative cysteine hydrolases"/>
    <property type="match status" value="1"/>
</dbReference>
<accession>B3PPK3</accession>
<proteinExistence type="inferred from homology"/>
<reference key="1">
    <citation type="journal article" date="2010" name="Appl. Environ. Microbiol.">
        <title>Conserved symbiotic plasmid DNA sequences in the multireplicon pangenomic structure of Rhizobium etli.</title>
        <authorList>
            <person name="Gonzalez V."/>
            <person name="Acosta J.L."/>
            <person name="Santamaria R.I."/>
            <person name="Bustos P."/>
            <person name="Fernandez J.L."/>
            <person name="Hernandez Gonzalez I.L."/>
            <person name="Diaz R."/>
            <person name="Flores M."/>
            <person name="Palacios R."/>
            <person name="Mora J."/>
            <person name="Davila G."/>
        </authorList>
    </citation>
    <scope>NUCLEOTIDE SEQUENCE [LARGE SCALE GENOMIC DNA]</scope>
    <source>
        <strain>CIAT 652</strain>
    </source>
</reference>
<sequence>MITEGAARRVHIIQGEYKVLSDPNAVLSTILGSCVAACLRDPVAGIGGMNHFLLPGSATSPTSGGDATRYGVHLMELLINGLLKQGARRDRLEAKIFGGAKTISTFSNVGEQNAAFAMQFLRDEGIPVVGSSTGGEHGRKLEYWPVSGRARQYPLTGAETQRTVALEQRPAAPQKPVETSIEFF</sequence>
<keyword id="KW-0145">Chemotaxis</keyword>
<keyword id="KW-0378">Hydrolase</keyword>
<gene>
    <name evidence="1" type="primary">cheD</name>
    <name type="ordered locus">RHECIAT_CH0000721</name>
</gene>
<feature type="chain" id="PRO_1000145893" description="Probable chemoreceptor glutamine deamidase CheD">
    <location>
        <begin position="1"/>
        <end position="184"/>
    </location>
</feature>
<protein>
    <recommendedName>
        <fullName evidence="1">Probable chemoreceptor glutamine deamidase CheD</fullName>
        <ecNumber evidence="1">3.5.1.44</ecNumber>
    </recommendedName>
</protein>